<feature type="chain" id="PRO_1000003409" description="Large ribosomal subunit protein bL36">
    <location>
        <begin position="1"/>
        <end position="41"/>
    </location>
</feature>
<accession>A8GNY2</accession>
<name>RL36_RICAH</name>
<reference key="1">
    <citation type="submission" date="2007-09" db="EMBL/GenBank/DDBJ databases">
        <title>Complete genome sequence of Rickettsia akari.</title>
        <authorList>
            <person name="Madan A."/>
            <person name="Fahey J."/>
            <person name="Helton E."/>
            <person name="Ketteman M."/>
            <person name="Madan A."/>
            <person name="Rodrigues S."/>
            <person name="Sanchez A."/>
            <person name="Whiting M."/>
            <person name="Dasch G."/>
            <person name="Eremeeva M."/>
        </authorList>
    </citation>
    <scope>NUCLEOTIDE SEQUENCE [LARGE SCALE GENOMIC DNA]</scope>
    <source>
        <strain>Hartford</strain>
    </source>
</reference>
<dbReference type="EMBL" id="CP000847">
    <property type="protein sequence ID" value="ABV75107.1"/>
    <property type="molecule type" value="Genomic_DNA"/>
</dbReference>
<dbReference type="SMR" id="A8GNY2"/>
<dbReference type="STRING" id="293614.A1C_04170"/>
<dbReference type="KEGG" id="rak:A1C_04170"/>
<dbReference type="eggNOG" id="COG0257">
    <property type="taxonomic scope" value="Bacteria"/>
</dbReference>
<dbReference type="HOGENOM" id="CLU_135723_3_2_5"/>
<dbReference type="Proteomes" id="UP000006830">
    <property type="component" value="Chromosome"/>
</dbReference>
<dbReference type="GO" id="GO:1990904">
    <property type="term" value="C:ribonucleoprotein complex"/>
    <property type="evidence" value="ECO:0007669"/>
    <property type="project" value="UniProtKB-KW"/>
</dbReference>
<dbReference type="GO" id="GO:0005840">
    <property type="term" value="C:ribosome"/>
    <property type="evidence" value="ECO:0007669"/>
    <property type="project" value="UniProtKB-KW"/>
</dbReference>
<dbReference type="GO" id="GO:0003735">
    <property type="term" value="F:structural constituent of ribosome"/>
    <property type="evidence" value="ECO:0007669"/>
    <property type="project" value="InterPro"/>
</dbReference>
<dbReference type="GO" id="GO:0006412">
    <property type="term" value="P:translation"/>
    <property type="evidence" value="ECO:0007669"/>
    <property type="project" value="UniProtKB-UniRule"/>
</dbReference>
<dbReference type="HAMAP" id="MF_00251">
    <property type="entry name" value="Ribosomal_bL36"/>
    <property type="match status" value="1"/>
</dbReference>
<dbReference type="InterPro" id="IPR000473">
    <property type="entry name" value="Ribosomal_bL36"/>
</dbReference>
<dbReference type="InterPro" id="IPR035977">
    <property type="entry name" value="Ribosomal_bL36_sp"/>
</dbReference>
<dbReference type="InterPro" id="IPR047621">
    <property type="entry name" value="Ribosomal_L36_bact"/>
</dbReference>
<dbReference type="NCBIfam" id="NF002021">
    <property type="entry name" value="PRK00831.1"/>
    <property type="match status" value="1"/>
</dbReference>
<dbReference type="PANTHER" id="PTHR47781">
    <property type="entry name" value="50S RIBOSOMAL PROTEIN L36 2"/>
    <property type="match status" value="1"/>
</dbReference>
<dbReference type="PANTHER" id="PTHR47781:SF1">
    <property type="entry name" value="LARGE RIBOSOMAL SUBUNIT PROTEIN BL36B"/>
    <property type="match status" value="1"/>
</dbReference>
<dbReference type="Pfam" id="PF00444">
    <property type="entry name" value="Ribosomal_L36"/>
    <property type="match status" value="1"/>
</dbReference>
<dbReference type="SUPFAM" id="SSF57840">
    <property type="entry name" value="Ribosomal protein L36"/>
    <property type="match status" value="1"/>
</dbReference>
<dbReference type="PROSITE" id="PS00828">
    <property type="entry name" value="RIBOSOMAL_L36"/>
    <property type="match status" value="1"/>
</dbReference>
<gene>
    <name evidence="1" type="primary">rpmJ</name>
    <name type="ordered locus">A1C_04170</name>
</gene>
<organism>
    <name type="scientific">Rickettsia akari (strain Hartford)</name>
    <dbReference type="NCBI Taxonomy" id="293614"/>
    <lineage>
        <taxon>Bacteria</taxon>
        <taxon>Pseudomonadati</taxon>
        <taxon>Pseudomonadota</taxon>
        <taxon>Alphaproteobacteria</taxon>
        <taxon>Rickettsiales</taxon>
        <taxon>Rickettsiaceae</taxon>
        <taxon>Rickettsieae</taxon>
        <taxon>Rickettsia</taxon>
        <taxon>spotted fever group</taxon>
    </lineage>
</organism>
<evidence type="ECO:0000255" key="1">
    <source>
        <dbReference type="HAMAP-Rule" id="MF_00251"/>
    </source>
</evidence>
<evidence type="ECO:0000305" key="2"/>
<proteinExistence type="inferred from homology"/>
<comment type="similarity">
    <text evidence="1">Belongs to the bacterial ribosomal protein bL36 family.</text>
</comment>
<sequence>MKVVSSLKSLKKRDKDCQIVKRRGKIFVINKKNKRFKAKQG</sequence>
<keyword id="KW-0687">Ribonucleoprotein</keyword>
<keyword id="KW-0689">Ribosomal protein</keyword>
<protein>
    <recommendedName>
        <fullName evidence="1">Large ribosomal subunit protein bL36</fullName>
    </recommendedName>
    <alternativeName>
        <fullName evidence="2">50S ribosomal protein L36</fullName>
    </alternativeName>
</protein>